<accession>Q3V1V3</accession>
<sequence length="845" mass="98048">MSSKQEIMDDQRFRRVSKDPRFWEMPEKERKVKIDKRFRAMFHDKKFKLNYAVDKRGRPISHSTTEDLKRFYDLSDSDSDLSDEESKILSQKKAKQKKKQTKKEAKSIEKPIEEKKKETKKTDQKDSINKHDLNNSERVQKMKNSQKPQKIDSEISPKKDNEEFLQNKKKKRGTTDLSVEALPKGKLRTKDSSTSEMVKSSTMSSSKAKREKQSVVPVIMAKDNDGKMPDEDALEEDSDSASELGSDEESEDEIISDGKTSADEDESEEEDEEEEEDSEEEEEEEEEDESDSGPDLARGKGNVETSSEDEDDLADLFPEEPGFEHAWRELDKDAPRADEITRRLAVCNMDWDRLKAKDLLALFNSFKPKGGVVFSVKIYPSEFGKERMKEEQVQGPVELLSIPEDAPEKDWASREKLRDYQFKRLKYYYAVAECDSPETASKIYEDCDGLEFESSCSFIDLRFIPDDITFDDEPKDVALEVDLTAYKPKYFTSAAMGTSTVEITWDETDHERITTLNRKFKKDELLDMDFQAYLASSSEDEEEVEEAPEGEEGVNIGEDGKTKKSQKDDEEQIAKYRQLLQVIQEKEKKGKENDMEMEIKWVPGLKESAEEMVKNKLEGKDKLTPWEQFLEKKKEKKRLKKKQKALAEEDSEDELPSDVDFNDPYFAEEVKKIGIKKKSMKSAKDSASSEEETDLEKQKAEMALLVMDEEEDSKKHFNYDKIVEHQNLSKKKKKQLMKKKELVEDDFEVNVSDARFQAMYTSHLFNLDPSDPNFKKTKAMEKILEEKARHRERKEELLIQAVERAQQDTGKPTQKQPMDPALSMLIKSVKNKTEQFQARKKQRVK</sequence>
<gene>
    <name type="primary">Esf1</name>
    <name type="synonym">Abtap</name>
</gene>
<feature type="initiator methionine" description="Removed" evidence="2">
    <location>
        <position position="1"/>
    </location>
</feature>
<feature type="chain" id="PRO_0000233166" description="ESF1 homolog">
    <location>
        <begin position="2"/>
        <end position="845"/>
    </location>
</feature>
<feature type="region of interest" description="Disordered" evidence="4">
    <location>
        <begin position="54"/>
        <end position="321"/>
    </location>
</feature>
<feature type="region of interest" description="Disordered" evidence="4">
    <location>
        <begin position="536"/>
        <end position="570"/>
    </location>
</feature>
<feature type="region of interest" description="Disordered" evidence="4">
    <location>
        <begin position="634"/>
        <end position="660"/>
    </location>
</feature>
<feature type="region of interest" description="Disordered" evidence="4">
    <location>
        <begin position="676"/>
        <end position="696"/>
    </location>
</feature>
<feature type="coiled-coil region" evidence="3">
    <location>
        <begin position="775"/>
        <end position="803"/>
    </location>
</feature>
<feature type="compositionally biased region" description="Basic and acidic residues" evidence="4">
    <location>
        <begin position="64"/>
        <end position="73"/>
    </location>
</feature>
<feature type="compositionally biased region" description="Basic residues" evidence="4">
    <location>
        <begin position="90"/>
        <end position="101"/>
    </location>
</feature>
<feature type="compositionally biased region" description="Basic and acidic residues" evidence="4">
    <location>
        <begin position="102"/>
        <end position="140"/>
    </location>
</feature>
<feature type="compositionally biased region" description="Basic and acidic residues" evidence="4">
    <location>
        <begin position="149"/>
        <end position="166"/>
    </location>
</feature>
<feature type="compositionally biased region" description="Low complexity" evidence="4">
    <location>
        <begin position="194"/>
        <end position="206"/>
    </location>
</feature>
<feature type="compositionally biased region" description="Acidic residues" evidence="4">
    <location>
        <begin position="231"/>
        <end position="255"/>
    </location>
</feature>
<feature type="compositionally biased region" description="Acidic residues" evidence="4">
    <location>
        <begin position="263"/>
        <end position="292"/>
    </location>
</feature>
<feature type="compositionally biased region" description="Acidic residues" evidence="4">
    <location>
        <begin position="306"/>
        <end position="318"/>
    </location>
</feature>
<feature type="compositionally biased region" description="Acidic residues" evidence="4">
    <location>
        <begin position="538"/>
        <end position="552"/>
    </location>
</feature>
<feature type="compositionally biased region" description="Basic and acidic residues" evidence="4">
    <location>
        <begin position="558"/>
        <end position="567"/>
    </location>
</feature>
<feature type="compositionally biased region" description="Basic residues" evidence="4">
    <location>
        <begin position="634"/>
        <end position="644"/>
    </location>
</feature>
<feature type="compositionally biased region" description="Acidic residues" evidence="4">
    <location>
        <begin position="648"/>
        <end position="660"/>
    </location>
</feature>
<feature type="modified residue" description="N-acetylserine" evidence="2">
    <location>
        <position position="2"/>
    </location>
</feature>
<feature type="modified residue" description="Phosphoserine" evidence="2">
    <location>
        <position position="75"/>
    </location>
</feature>
<feature type="modified residue" description="Phosphoserine" evidence="2">
    <location>
        <position position="77"/>
    </location>
</feature>
<feature type="modified residue" description="Phosphoserine" evidence="2">
    <location>
        <position position="79"/>
    </location>
</feature>
<feature type="modified residue" description="Phosphoserine" evidence="2">
    <location>
        <position position="82"/>
    </location>
</feature>
<feature type="modified residue" description="Phosphoserine" evidence="2">
    <location>
        <position position="136"/>
    </location>
</feature>
<feature type="modified residue" description="Phosphoserine" evidence="6 7">
    <location>
        <position position="156"/>
    </location>
</feature>
<feature type="modified residue" description="Phosphoserine" evidence="2">
    <location>
        <position position="200"/>
    </location>
</feature>
<feature type="modified residue" description="Phosphoserine" evidence="2">
    <location>
        <position position="290"/>
    </location>
</feature>
<feature type="modified residue" description="Phosphoserine" evidence="2">
    <location>
        <position position="292"/>
    </location>
</feature>
<feature type="modified residue" description="Phosphothreonine" evidence="8">
    <location>
        <position position="305"/>
    </location>
</feature>
<feature type="modified residue" description="Phosphoserine" evidence="2">
    <location>
        <position position="306"/>
    </location>
</feature>
<feature type="modified residue" description="Phosphoserine" evidence="2">
    <location>
        <position position="307"/>
    </location>
</feature>
<feature type="modified residue" description="Phosphoserine" evidence="2">
    <location>
        <position position="608"/>
    </location>
</feature>
<feature type="modified residue" description="Phosphoserine" evidence="7 8">
    <location>
        <position position="651"/>
    </location>
</feature>
<feature type="modified residue" description="Phosphoserine" evidence="7 8">
    <location>
        <position position="657"/>
    </location>
</feature>
<feature type="modified residue" description="Phosphoserine" evidence="7 8">
    <location>
        <position position="686"/>
    </location>
</feature>
<feature type="modified residue" description="Phosphoserine" evidence="7 8">
    <location>
        <position position="688"/>
    </location>
</feature>
<feature type="modified residue" description="Phosphoserine" evidence="7 8">
    <location>
        <position position="689"/>
    </location>
</feature>
<feature type="modified residue" description="Phosphoserine" evidence="2">
    <location>
        <position position="729"/>
    </location>
</feature>
<organism>
    <name type="scientific">Mus musculus</name>
    <name type="common">Mouse</name>
    <dbReference type="NCBI Taxonomy" id="10090"/>
    <lineage>
        <taxon>Eukaryota</taxon>
        <taxon>Metazoa</taxon>
        <taxon>Chordata</taxon>
        <taxon>Craniata</taxon>
        <taxon>Vertebrata</taxon>
        <taxon>Euteleostomi</taxon>
        <taxon>Mammalia</taxon>
        <taxon>Eutheria</taxon>
        <taxon>Euarchontoglires</taxon>
        <taxon>Glires</taxon>
        <taxon>Rodentia</taxon>
        <taxon>Myomorpha</taxon>
        <taxon>Muroidea</taxon>
        <taxon>Muridae</taxon>
        <taxon>Murinae</taxon>
        <taxon>Mus</taxon>
        <taxon>Mus</taxon>
    </lineage>
</organism>
<proteinExistence type="evidence at protein level"/>
<reference key="1">
    <citation type="journal article" date="2005" name="Science">
        <title>The transcriptional landscape of the mammalian genome.</title>
        <authorList>
            <person name="Carninci P."/>
            <person name="Kasukawa T."/>
            <person name="Katayama S."/>
            <person name="Gough J."/>
            <person name="Frith M.C."/>
            <person name="Maeda N."/>
            <person name="Oyama R."/>
            <person name="Ravasi T."/>
            <person name="Lenhard B."/>
            <person name="Wells C."/>
            <person name="Kodzius R."/>
            <person name="Shimokawa K."/>
            <person name="Bajic V.B."/>
            <person name="Brenner S.E."/>
            <person name="Batalov S."/>
            <person name="Forrest A.R."/>
            <person name="Zavolan M."/>
            <person name="Davis M.J."/>
            <person name="Wilming L.G."/>
            <person name="Aidinis V."/>
            <person name="Allen J.E."/>
            <person name="Ambesi-Impiombato A."/>
            <person name="Apweiler R."/>
            <person name="Aturaliya R.N."/>
            <person name="Bailey T.L."/>
            <person name="Bansal M."/>
            <person name="Baxter L."/>
            <person name="Beisel K.W."/>
            <person name="Bersano T."/>
            <person name="Bono H."/>
            <person name="Chalk A.M."/>
            <person name="Chiu K.P."/>
            <person name="Choudhary V."/>
            <person name="Christoffels A."/>
            <person name="Clutterbuck D.R."/>
            <person name="Crowe M.L."/>
            <person name="Dalla E."/>
            <person name="Dalrymple B.P."/>
            <person name="de Bono B."/>
            <person name="Della Gatta G."/>
            <person name="di Bernardo D."/>
            <person name="Down T."/>
            <person name="Engstrom P."/>
            <person name="Fagiolini M."/>
            <person name="Faulkner G."/>
            <person name="Fletcher C.F."/>
            <person name="Fukushima T."/>
            <person name="Furuno M."/>
            <person name="Futaki S."/>
            <person name="Gariboldi M."/>
            <person name="Georgii-Hemming P."/>
            <person name="Gingeras T.R."/>
            <person name="Gojobori T."/>
            <person name="Green R.E."/>
            <person name="Gustincich S."/>
            <person name="Harbers M."/>
            <person name="Hayashi Y."/>
            <person name="Hensch T.K."/>
            <person name="Hirokawa N."/>
            <person name="Hill D."/>
            <person name="Huminiecki L."/>
            <person name="Iacono M."/>
            <person name="Ikeo K."/>
            <person name="Iwama A."/>
            <person name="Ishikawa T."/>
            <person name="Jakt M."/>
            <person name="Kanapin A."/>
            <person name="Katoh M."/>
            <person name="Kawasawa Y."/>
            <person name="Kelso J."/>
            <person name="Kitamura H."/>
            <person name="Kitano H."/>
            <person name="Kollias G."/>
            <person name="Krishnan S.P."/>
            <person name="Kruger A."/>
            <person name="Kummerfeld S.K."/>
            <person name="Kurochkin I.V."/>
            <person name="Lareau L.F."/>
            <person name="Lazarevic D."/>
            <person name="Lipovich L."/>
            <person name="Liu J."/>
            <person name="Liuni S."/>
            <person name="McWilliam S."/>
            <person name="Madan Babu M."/>
            <person name="Madera M."/>
            <person name="Marchionni L."/>
            <person name="Matsuda H."/>
            <person name="Matsuzawa S."/>
            <person name="Miki H."/>
            <person name="Mignone F."/>
            <person name="Miyake S."/>
            <person name="Morris K."/>
            <person name="Mottagui-Tabar S."/>
            <person name="Mulder N."/>
            <person name="Nakano N."/>
            <person name="Nakauchi H."/>
            <person name="Ng P."/>
            <person name="Nilsson R."/>
            <person name="Nishiguchi S."/>
            <person name="Nishikawa S."/>
            <person name="Nori F."/>
            <person name="Ohara O."/>
            <person name="Okazaki Y."/>
            <person name="Orlando V."/>
            <person name="Pang K.C."/>
            <person name="Pavan W.J."/>
            <person name="Pavesi G."/>
            <person name="Pesole G."/>
            <person name="Petrovsky N."/>
            <person name="Piazza S."/>
            <person name="Reed J."/>
            <person name="Reid J.F."/>
            <person name="Ring B.Z."/>
            <person name="Ringwald M."/>
            <person name="Rost B."/>
            <person name="Ruan Y."/>
            <person name="Salzberg S.L."/>
            <person name="Sandelin A."/>
            <person name="Schneider C."/>
            <person name="Schoenbach C."/>
            <person name="Sekiguchi K."/>
            <person name="Semple C.A."/>
            <person name="Seno S."/>
            <person name="Sessa L."/>
            <person name="Sheng Y."/>
            <person name="Shibata Y."/>
            <person name="Shimada H."/>
            <person name="Shimada K."/>
            <person name="Silva D."/>
            <person name="Sinclair B."/>
            <person name="Sperling S."/>
            <person name="Stupka E."/>
            <person name="Sugiura K."/>
            <person name="Sultana R."/>
            <person name="Takenaka Y."/>
            <person name="Taki K."/>
            <person name="Tammoja K."/>
            <person name="Tan S.L."/>
            <person name="Tang S."/>
            <person name="Taylor M.S."/>
            <person name="Tegner J."/>
            <person name="Teichmann S.A."/>
            <person name="Ueda H.R."/>
            <person name="van Nimwegen E."/>
            <person name="Verardo R."/>
            <person name="Wei C.L."/>
            <person name="Yagi K."/>
            <person name="Yamanishi H."/>
            <person name="Zabarovsky E."/>
            <person name="Zhu S."/>
            <person name="Zimmer A."/>
            <person name="Hide W."/>
            <person name="Bult C."/>
            <person name="Grimmond S.M."/>
            <person name="Teasdale R.D."/>
            <person name="Liu E.T."/>
            <person name="Brusic V."/>
            <person name="Quackenbush J."/>
            <person name="Wahlestedt C."/>
            <person name="Mattick J.S."/>
            <person name="Hume D.A."/>
            <person name="Kai C."/>
            <person name="Sasaki D."/>
            <person name="Tomaru Y."/>
            <person name="Fukuda S."/>
            <person name="Kanamori-Katayama M."/>
            <person name="Suzuki M."/>
            <person name="Aoki J."/>
            <person name="Arakawa T."/>
            <person name="Iida J."/>
            <person name="Imamura K."/>
            <person name="Itoh M."/>
            <person name="Kato T."/>
            <person name="Kawaji H."/>
            <person name="Kawagashira N."/>
            <person name="Kawashima T."/>
            <person name="Kojima M."/>
            <person name="Kondo S."/>
            <person name="Konno H."/>
            <person name="Nakano K."/>
            <person name="Ninomiya N."/>
            <person name="Nishio T."/>
            <person name="Okada M."/>
            <person name="Plessy C."/>
            <person name="Shibata K."/>
            <person name="Shiraki T."/>
            <person name="Suzuki S."/>
            <person name="Tagami M."/>
            <person name="Waki K."/>
            <person name="Watahiki A."/>
            <person name="Okamura-Oho Y."/>
            <person name="Suzuki H."/>
            <person name="Kawai J."/>
            <person name="Hayashizaki Y."/>
        </authorList>
    </citation>
    <scope>NUCLEOTIDE SEQUENCE [LARGE SCALE MRNA]</scope>
    <source>
        <strain>C57BL/6J</strain>
        <tissue>Brain</tissue>
    </source>
</reference>
<reference key="2">
    <citation type="submission" date="2009-01" db="UniProtKB">
        <authorList>
            <person name="Lubec G."/>
            <person name="Sunyer B."/>
            <person name="Chen W.-Q."/>
        </authorList>
    </citation>
    <scope>PROTEIN SEQUENCE OF 783-791</scope>
    <scope>IDENTIFICATION BY MASS SPECTROMETRY</scope>
    <source>
        <strain>OF1</strain>
        <tissue>Hippocampus</tissue>
    </source>
</reference>
<reference key="3">
    <citation type="journal article" date="2009" name="Immunity">
        <title>The phagosomal proteome in interferon-gamma-activated macrophages.</title>
        <authorList>
            <person name="Trost M."/>
            <person name="English L."/>
            <person name="Lemieux S."/>
            <person name="Courcelles M."/>
            <person name="Desjardins M."/>
            <person name="Thibault P."/>
        </authorList>
    </citation>
    <scope>PHOSPHORYLATION [LARGE SCALE ANALYSIS] AT SER-156; SER-651; SER-657; SER-686; SER-688 AND SER-689</scope>
    <scope>IDENTIFICATION BY MASS SPECTROMETRY [LARGE SCALE ANALYSIS]</scope>
</reference>
<reference key="4">
    <citation type="journal article" date="2009" name="Mol. Cell. Proteomics">
        <title>Large scale localization of protein phosphorylation by use of electron capture dissociation mass spectrometry.</title>
        <authorList>
            <person name="Sweet S.M."/>
            <person name="Bailey C.M."/>
            <person name="Cunningham D.L."/>
            <person name="Heath J.K."/>
            <person name="Cooper H.J."/>
        </authorList>
    </citation>
    <scope>PHOSPHORYLATION [LARGE SCALE ANALYSIS] AT SER-156</scope>
    <scope>IDENTIFICATION BY MASS SPECTROMETRY [LARGE SCALE ANALYSIS]</scope>
    <source>
        <tissue>Embryonic fibroblast</tissue>
    </source>
</reference>
<reference key="5">
    <citation type="journal article" date="2010" name="Cell">
        <title>A tissue-specific atlas of mouse protein phosphorylation and expression.</title>
        <authorList>
            <person name="Huttlin E.L."/>
            <person name="Jedrychowski M.P."/>
            <person name="Elias J.E."/>
            <person name="Goswami T."/>
            <person name="Rad R."/>
            <person name="Beausoleil S.A."/>
            <person name="Villen J."/>
            <person name="Haas W."/>
            <person name="Sowa M.E."/>
            <person name="Gygi S.P."/>
        </authorList>
    </citation>
    <scope>PHOSPHORYLATION [LARGE SCALE ANALYSIS] AT THR-305; SER-651; SER-657; SER-686; SER-688 AND SER-689</scope>
    <scope>IDENTIFICATION BY MASS SPECTROMETRY [LARGE SCALE ANALYSIS]</scope>
    <source>
        <tissue>Brain</tissue>
        <tissue>Brown adipose tissue</tissue>
        <tissue>Heart</tissue>
        <tissue>Kidney</tissue>
        <tissue>Liver</tissue>
        <tissue>Lung</tissue>
        <tissue>Pancreas</tissue>
        <tissue>Spleen</tissue>
        <tissue>Testis</tissue>
    </source>
</reference>
<protein>
    <recommendedName>
        <fullName>ESF1 homolog</fullName>
    </recommendedName>
    <alternativeName>
        <fullName>ABT1-associated protein</fullName>
    </alternativeName>
</protein>
<evidence type="ECO:0000250" key="1"/>
<evidence type="ECO:0000250" key="2">
    <source>
        <dbReference type="UniProtKB" id="Q9H501"/>
    </source>
</evidence>
<evidence type="ECO:0000255" key="3"/>
<evidence type="ECO:0000256" key="4">
    <source>
        <dbReference type="SAM" id="MobiDB-lite"/>
    </source>
</evidence>
<evidence type="ECO:0000305" key="5"/>
<evidence type="ECO:0007744" key="6">
    <source>
    </source>
</evidence>
<evidence type="ECO:0007744" key="7">
    <source>
    </source>
</evidence>
<evidence type="ECO:0007744" key="8">
    <source>
    </source>
</evidence>
<keyword id="KW-0007">Acetylation</keyword>
<keyword id="KW-0175">Coiled coil</keyword>
<keyword id="KW-0903">Direct protein sequencing</keyword>
<keyword id="KW-0539">Nucleus</keyword>
<keyword id="KW-0597">Phosphoprotein</keyword>
<keyword id="KW-1185">Reference proteome</keyword>
<keyword id="KW-0804">Transcription</keyword>
<keyword id="KW-0805">Transcription regulation</keyword>
<comment type="function">
    <text evidence="1">May constitute a novel regulatory system for basal transcription. Negatively regulates ABT1 (By similarity).</text>
</comment>
<comment type="subunit">
    <text evidence="1">Interacts with ABT1. Forms a complex with ABT1 and suppresses the ABT1-induced activation of polymerase II-directed transcription in mammalian cells (By similarity).</text>
</comment>
<comment type="subcellular location">
    <subcellularLocation>
        <location evidence="1">Nucleus</location>
        <location evidence="1">Nucleolus</location>
    </subcellularLocation>
    <subcellularLocation>
        <location evidence="1">Nucleus</location>
        <location evidence="1">Nucleoplasm</location>
    </subcellularLocation>
</comment>
<comment type="similarity">
    <text evidence="5">Belongs to the ESF1 family.</text>
</comment>
<dbReference type="EMBL" id="AK132230">
    <property type="protein sequence ID" value="BAE21046.1"/>
    <property type="molecule type" value="mRNA"/>
</dbReference>
<dbReference type="CCDS" id="CCDS38250.1"/>
<dbReference type="RefSeq" id="NP_001074559.1">
    <property type="nucleotide sequence ID" value="NM_001081090.2"/>
</dbReference>
<dbReference type="RefSeq" id="XP_006500074.1">
    <property type="nucleotide sequence ID" value="XM_006500011.5"/>
</dbReference>
<dbReference type="BioGRID" id="211568">
    <property type="interactions" value="33"/>
</dbReference>
<dbReference type="FunCoup" id="Q3V1V3">
    <property type="interactions" value="3471"/>
</dbReference>
<dbReference type="IntAct" id="Q3V1V3">
    <property type="interactions" value="1"/>
</dbReference>
<dbReference type="MINT" id="Q3V1V3"/>
<dbReference type="STRING" id="10090.ENSMUSP00000036523"/>
<dbReference type="GlyGen" id="Q3V1V3">
    <property type="glycosylation" value="1 site, 1 O-linked glycan (1 site)"/>
</dbReference>
<dbReference type="iPTMnet" id="Q3V1V3"/>
<dbReference type="PhosphoSitePlus" id="Q3V1V3"/>
<dbReference type="jPOST" id="Q3V1V3"/>
<dbReference type="PaxDb" id="10090-ENSMUSP00000036523"/>
<dbReference type="ProteomicsDB" id="275782"/>
<dbReference type="Pumba" id="Q3V1V3"/>
<dbReference type="Antibodypedia" id="24268">
    <property type="antibodies" value="68 antibodies from 17 providers"/>
</dbReference>
<dbReference type="Ensembl" id="ENSMUST00000046030.8">
    <property type="protein sequence ID" value="ENSMUSP00000036523.8"/>
    <property type="gene ID" value="ENSMUSG00000045624.16"/>
</dbReference>
<dbReference type="GeneID" id="66580"/>
<dbReference type="KEGG" id="mmu:66580"/>
<dbReference type="UCSC" id="uc008mpn.1">
    <property type="organism name" value="mouse"/>
</dbReference>
<dbReference type="AGR" id="MGI:1913830"/>
<dbReference type="CTD" id="51575"/>
<dbReference type="MGI" id="MGI:1913830">
    <property type="gene designation" value="Esf1"/>
</dbReference>
<dbReference type="VEuPathDB" id="HostDB:ENSMUSG00000045624"/>
<dbReference type="eggNOG" id="KOG2318">
    <property type="taxonomic scope" value="Eukaryota"/>
</dbReference>
<dbReference type="GeneTree" id="ENSGT00390000004881"/>
<dbReference type="HOGENOM" id="CLU_010564_2_1_1"/>
<dbReference type="InParanoid" id="Q3V1V3"/>
<dbReference type="OMA" id="DHDFAID"/>
<dbReference type="OrthoDB" id="431825at2759"/>
<dbReference type="PhylomeDB" id="Q3V1V3"/>
<dbReference type="TreeFam" id="TF105822"/>
<dbReference type="BioGRID-ORCS" id="66580">
    <property type="hits" value="25 hits in 78 CRISPR screens"/>
</dbReference>
<dbReference type="ChiTaRS" id="Esf1">
    <property type="organism name" value="mouse"/>
</dbReference>
<dbReference type="PRO" id="PR:Q3V1V3"/>
<dbReference type="Proteomes" id="UP000000589">
    <property type="component" value="Chromosome 2"/>
</dbReference>
<dbReference type="RNAct" id="Q3V1V3">
    <property type="molecule type" value="protein"/>
</dbReference>
<dbReference type="Bgee" id="ENSMUSG00000045624">
    <property type="expression patterns" value="Expressed in embryonic post-anal tail and 262 other cell types or tissues"/>
</dbReference>
<dbReference type="ExpressionAtlas" id="Q3V1V3">
    <property type="expression patterns" value="baseline and differential"/>
</dbReference>
<dbReference type="GO" id="GO:0005730">
    <property type="term" value="C:nucleolus"/>
    <property type="evidence" value="ECO:0007669"/>
    <property type="project" value="UniProtKB-SubCell"/>
</dbReference>
<dbReference type="GO" id="GO:0005654">
    <property type="term" value="C:nucleoplasm"/>
    <property type="evidence" value="ECO:0007669"/>
    <property type="project" value="UniProtKB-SubCell"/>
</dbReference>
<dbReference type="GO" id="GO:0006364">
    <property type="term" value="P:rRNA processing"/>
    <property type="evidence" value="ECO:0007669"/>
    <property type="project" value="InterPro"/>
</dbReference>
<dbReference type="InterPro" id="IPR039754">
    <property type="entry name" value="Esf1"/>
</dbReference>
<dbReference type="InterPro" id="IPR012580">
    <property type="entry name" value="NUC153"/>
</dbReference>
<dbReference type="InterPro" id="IPR056750">
    <property type="entry name" value="RRM_ESF1"/>
</dbReference>
<dbReference type="PANTHER" id="PTHR12202">
    <property type="entry name" value="ESF1 HOMOLOG"/>
    <property type="match status" value="1"/>
</dbReference>
<dbReference type="PANTHER" id="PTHR12202:SF0">
    <property type="entry name" value="ESF1 HOMOLOG"/>
    <property type="match status" value="1"/>
</dbReference>
<dbReference type="Pfam" id="PF08159">
    <property type="entry name" value="NUC153"/>
    <property type="match status" value="1"/>
</dbReference>
<dbReference type="Pfam" id="PF25121">
    <property type="entry name" value="RRM_ESF1"/>
    <property type="match status" value="1"/>
</dbReference>
<name>ESF1_MOUSE</name>